<proteinExistence type="evidence at transcript level"/>
<dbReference type="EMBL" id="BX530067">
    <property type="protein sequence ID" value="CAN88150.1"/>
    <property type="molecule type" value="Genomic_DNA"/>
</dbReference>
<dbReference type="EMBL" id="BC095331">
    <property type="protein sequence ID" value="AAH95331.1"/>
    <property type="molecule type" value="mRNA"/>
</dbReference>
<dbReference type="RefSeq" id="NP_001018445.1">
    <property type="nucleotide sequence ID" value="NM_001020609.1"/>
</dbReference>
<dbReference type="SMR" id="Q503H1"/>
<dbReference type="FunCoup" id="Q503H1">
    <property type="interactions" value="46"/>
</dbReference>
<dbReference type="STRING" id="7955.ENSDARP00000141333"/>
<dbReference type="PaxDb" id="7955-ENSDARP00000052291"/>
<dbReference type="Ensembl" id="ENSDART00000158059">
    <property type="protein sequence ID" value="ENSDARP00000141333"/>
    <property type="gene ID" value="ENSDARG00000101323"/>
</dbReference>
<dbReference type="GeneID" id="553636"/>
<dbReference type="KEGG" id="dre:553636"/>
<dbReference type="AGR" id="ZFIN:ZDB-GENE-050522-502"/>
<dbReference type="CTD" id="553636"/>
<dbReference type="ZFIN" id="ZDB-GENE-050522-502">
    <property type="gene designation" value="trnau1apa"/>
</dbReference>
<dbReference type="eggNOG" id="KOG0118">
    <property type="taxonomic scope" value="Eukaryota"/>
</dbReference>
<dbReference type="HOGENOM" id="CLU_016304_3_0_1"/>
<dbReference type="InParanoid" id="Q503H1"/>
<dbReference type="OMA" id="GYSKCCG"/>
<dbReference type="OrthoDB" id="446113at2759"/>
<dbReference type="PhylomeDB" id="Q503H1"/>
<dbReference type="TreeFam" id="TF313275"/>
<dbReference type="PRO" id="PR:Q503H1"/>
<dbReference type="Proteomes" id="UP000000437">
    <property type="component" value="Chromosome 19"/>
</dbReference>
<dbReference type="Bgee" id="ENSDARG00000101323">
    <property type="expression patterns" value="Expressed in testis and 26 other cell types or tissues"/>
</dbReference>
<dbReference type="ExpressionAtlas" id="Q503H1">
    <property type="expression patterns" value="baseline"/>
</dbReference>
<dbReference type="GO" id="GO:0005829">
    <property type="term" value="C:cytosol"/>
    <property type="evidence" value="ECO:0000318"/>
    <property type="project" value="GO_Central"/>
</dbReference>
<dbReference type="GO" id="GO:0005634">
    <property type="term" value="C:nucleus"/>
    <property type="evidence" value="ECO:0007669"/>
    <property type="project" value="UniProtKB-SubCell"/>
</dbReference>
<dbReference type="GO" id="GO:0003729">
    <property type="term" value="F:mRNA binding"/>
    <property type="evidence" value="ECO:0000318"/>
    <property type="project" value="GO_Central"/>
</dbReference>
<dbReference type="GO" id="GO:0006376">
    <property type="term" value="P:mRNA splice site recognition"/>
    <property type="evidence" value="ECO:0000318"/>
    <property type="project" value="GO_Central"/>
</dbReference>
<dbReference type="GO" id="GO:0006412">
    <property type="term" value="P:translation"/>
    <property type="evidence" value="ECO:0007669"/>
    <property type="project" value="UniProtKB-KW"/>
</dbReference>
<dbReference type="FunFam" id="3.30.70.330:FF:000166">
    <property type="entry name" value="Trna selenocysteine 1-associated protein 1"/>
    <property type="match status" value="1"/>
</dbReference>
<dbReference type="FunFam" id="3.30.70.330:FF:000159">
    <property type="entry name" value="tRNA selenocysteine 1-associated protein 1"/>
    <property type="match status" value="1"/>
</dbReference>
<dbReference type="Gene3D" id="3.30.70.330">
    <property type="match status" value="2"/>
</dbReference>
<dbReference type="InterPro" id="IPR012677">
    <property type="entry name" value="Nucleotide-bd_a/b_plait_sf"/>
</dbReference>
<dbReference type="InterPro" id="IPR035979">
    <property type="entry name" value="RBD_domain_sf"/>
</dbReference>
<dbReference type="InterPro" id="IPR000504">
    <property type="entry name" value="RRM_dom"/>
</dbReference>
<dbReference type="InterPro" id="IPR040434">
    <property type="entry name" value="TSAP1"/>
</dbReference>
<dbReference type="InterPro" id="IPR041085">
    <property type="entry name" value="TSAP1_C"/>
</dbReference>
<dbReference type="PANTHER" id="PTHR37457:SF2">
    <property type="entry name" value="TRNA SELENOCYSTEINE 1-ASSOCIATED PROTEIN 1"/>
    <property type="match status" value="1"/>
</dbReference>
<dbReference type="PANTHER" id="PTHR37457">
    <property type="entry name" value="TRNA SELENOCYSTEINE 1-ASSOCIATED PROTEIN 1-RELATED"/>
    <property type="match status" value="1"/>
</dbReference>
<dbReference type="Pfam" id="PF00076">
    <property type="entry name" value="RRM_1"/>
    <property type="match status" value="2"/>
</dbReference>
<dbReference type="Pfam" id="PF17654">
    <property type="entry name" value="Trnau1ap"/>
    <property type="match status" value="1"/>
</dbReference>
<dbReference type="SMART" id="SM00360">
    <property type="entry name" value="RRM"/>
    <property type="match status" value="2"/>
</dbReference>
<dbReference type="SUPFAM" id="SSF54928">
    <property type="entry name" value="RNA-binding domain, RBD"/>
    <property type="match status" value="1"/>
</dbReference>
<dbReference type="PROSITE" id="PS50102">
    <property type="entry name" value="RRM"/>
    <property type="match status" value="2"/>
</dbReference>
<protein>
    <recommendedName>
        <fullName evidence="7">tRNA selenocysteine 1-associated protein 1</fullName>
    </recommendedName>
    <alternativeName>
        <fullName evidence="1">tRNA selenocysteine-associated protein 1</fullName>
    </alternativeName>
</protein>
<feature type="chain" id="PRO_0000382232" description="tRNA selenocysteine 1-associated protein 1">
    <location>
        <begin position="1"/>
        <end position="314"/>
    </location>
</feature>
<feature type="domain" description="RRM 1" evidence="4">
    <location>
        <begin position="2"/>
        <end position="85"/>
    </location>
</feature>
<feature type="domain" description="RRM 2" evidence="4">
    <location>
        <begin position="94"/>
        <end position="173"/>
    </location>
</feature>
<organism>
    <name type="scientific">Danio rerio</name>
    <name type="common">Zebrafish</name>
    <name type="synonym">Brachydanio rerio</name>
    <dbReference type="NCBI Taxonomy" id="7955"/>
    <lineage>
        <taxon>Eukaryota</taxon>
        <taxon>Metazoa</taxon>
        <taxon>Chordata</taxon>
        <taxon>Craniata</taxon>
        <taxon>Vertebrata</taxon>
        <taxon>Euteleostomi</taxon>
        <taxon>Actinopterygii</taxon>
        <taxon>Neopterygii</taxon>
        <taxon>Teleostei</taxon>
        <taxon>Ostariophysi</taxon>
        <taxon>Cypriniformes</taxon>
        <taxon>Danionidae</taxon>
        <taxon>Danioninae</taxon>
        <taxon>Danio</taxon>
    </lineage>
</organism>
<gene>
    <name evidence="7" type="primary">trnau1ap</name>
    <name type="ORF">si:dkey-194c21.4</name>
    <name type="ORF">zgc:110606</name>
</gene>
<comment type="function">
    <text evidence="1">Involved in the early steps of selenocysteine biosynthesis and tRNA(Sec) charging to the later steps resulting in the cotranslational incorporation of selenocysteine into selenoproteins.</text>
</comment>
<comment type="subcellular location">
    <subcellularLocation>
        <location evidence="2">Nucleus</location>
    </subcellularLocation>
    <subcellularLocation>
        <location evidence="2">Cytoplasm</location>
    </subcellularLocation>
</comment>
<comment type="similarity">
    <text evidence="3">Belongs to the RRM TRSPAP family.</text>
</comment>
<keyword id="KW-0963">Cytoplasm</keyword>
<keyword id="KW-0539">Nucleus</keyword>
<keyword id="KW-0648">Protein biosynthesis</keyword>
<keyword id="KW-1185">Reference proteome</keyword>
<keyword id="KW-0677">Repeat</keyword>
<keyword id="KW-0694">RNA-binding</keyword>
<accession>Q503H1</accession>
<sequence length="314" mass="35510">MNSLWMGNLEPYMDEDFICRAFAQMGETVVKIRLIRDKITGKNAGYGFVELADDTAVERCLRKVNGKPLPGATPPKRFKLSRSNYGKQGESSTFSLFVSDLTPDVDDGMLYEFFHYHFSSCCSGKIVLDANGHSKCCGFVSFESEREQKRALVDLQGATGLGKKALRLSLASSRVNKKKESSENQIWQYHSDSKNASFINQYYYPQNLSYLSTYDWNYSLDYLNPSQNTTPVDVTQSEQTEDDDLEYPDSEINVTEANETFMAQSEELYSALIGCFFQPPESWDGVTCSASSYLPEPINQYEMEDSCSSNWVTT</sequence>
<name>TSAP1_DANRE</name>
<evidence type="ECO:0000250" key="1">
    <source>
        <dbReference type="UniProtKB" id="Q80VC6"/>
    </source>
</evidence>
<evidence type="ECO:0000250" key="2">
    <source>
        <dbReference type="UniProtKB" id="Q9QZI7"/>
    </source>
</evidence>
<evidence type="ECO:0000255" key="3"/>
<evidence type="ECO:0000255" key="4">
    <source>
        <dbReference type="PROSITE-ProRule" id="PRU00176"/>
    </source>
</evidence>
<evidence type="ECO:0000312" key="5">
    <source>
        <dbReference type="EMBL" id="AAH95331.1"/>
    </source>
</evidence>
<evidence type="ECO:0000312" key="6">
    <source>
        <dbReference type="EMBL" id="CAN88150.1"/>
    </source>
</evidence>
<evidence type="ECO:0000312" key="7">
    <source>
        <dbReference type="ZFIN" id="ZDB-GENE-050522-502"/>
    </source>
</evidence>
<reference key="1">
    <citation type="journal article" date="2013" name="Nature">
        <title>The zebrafish reference genome sequence and its relationship to the human genome.</title>
        <authorList>
            <person name="Howe K."/>
            <person name="Clark M.D."/>
            <person name="Torroja C.F."/>
            <person name="Torrance J."/>
            <person name="Berthelot C."/>
            <person name="Muffato M."/>
            <person name="Collins J.E."/>
            <person name="Humphray S."/>
            <person name="McLaren K."/>
            <person name="Matthews L."/>
            <person name="McLaren S."/>
            <person name="Sealy I."/>
            <person name="Caccamo M."/>
            <person name="Churcher C."/>
            <person name="Scott C."/>
            <person name="Barrett J.C."/>
            <person name="Koch R."/>
            <person name="Rauch G.J."/>
            <person name="White S."/>
            <person name="Chow W."/>
            <person name="Kilian B."/>
            <person name="Quintais L.T."/>
            <person name="Guerra-Assuncao J.A."/>
            <person name="Zhou Y."/>
            <person name="Gu Y."/>
            <person name="Yen J."/>
            <person name="Vogel J.H."/>
            <person name="Eyre T."/>
            <person name="Redmond S."/>
            <person name="Banerjee R."/>
            <person name="Chi J."/>
            <person name="Fu B."/>
            <person name="Langley E."/>
            <person name="Maguire S.F."/>
            <person name="Laird G.K."/>
            <person name="Lloyd D."/>
            <person name="Kenyon E."/>
            <person name="Donaldson S."/>
            <person name="Sehra H."/>
            <person name="Almeida-King J."/>
            <person name="Loveland J."/>
            <person name="Trevanion S."/>
            <person name="Jones M."/>
            <person name="Quail M."/>
            <person name="Willey D."/>
            <person name="Hunt A."/>
            <person name="Burton J."/>
            <person name="Sims S."/>
            <person name="McLay K."/>
            <person name="Plumb B."/>
            <person name="Davis J."/>
            <person name="Clee C."/>
            <person name="Oliver K."/>
            <person name="Clark R."/>
            <person name="Riddle C."/>
            <person name="Elliot D."/>
            <person name="Threadgold G."/>
            <person name="Harden G."/>
            <person name="Ware D."/>
            <person name="Begum S."/>
            <person name="Mortimore B."/>
            <person name="Kerry G."/>
            <person name="Heath P."/>
            <person name="Phillimore B."/>
            <person name="Tracey A."/>
            <person name="Corby N."/>
            <person name="Dunn M."/>
            <person name="Johnson C."/>
            <person name="Wood J."/>
            <person name="Clark S."/>
            <person name="Pelan S."/>
            <person name="Griffiths G."/>
            <person name="Smith M."/>
            <person name="Glithero R."/>
            <person name="Howden P."/>
            <person name="Barker N."/>
            <person name="Lloyd C."/>
            <person name="Stevens C."/>
            <person name="Harley J."/>
            <person name="Holt K."/>
            <person name="Panagiotidis G."/>
            <person name="Lovell J."/>
            <person name="Beasley H."/>
            <person name="Henderson C."/>
            <person name="Gordon D."/>
            <person name="Auger K."/>
            <person name="Wright D."/>
            <person name="Collins J."/>
            <person name="Raisen C."/>
            <person name="Dyer L."/>
            <person name="Leung K."/>
            <person name="Robertson L."/>
            <person name="Ambridge K."/>
            <person name="Leongamornlert D."/>
            <person name="McGuire S."/>
            <person name="Gilderthorp R."/>
            <person name="Griffiths C."/>
            <person name="Manthravadi D."/>
            <person name="Nichol S."/>
            <person name="Barker G."/>
            <person name="Whitehead S."/>
            <person name="Kay M."/>
            <person name="Brown J."/>
            <person name="Murnane C."/>
            <person name="Gray E."/>
            <person name="Humphries M."/>
            <person name="Sycamore N."/>
            <person name="Barker D."/>
            <person name="Saunders D."/>
            <person name="Wallis J."/>
            <person name="Babbage A."/>
            <person name="Hammond S."/>
            <person name="Mashreghi-Mohammadi M."/>
            <person name="Barr L."/>
            <person name="Martin S."/>
            <person name="Wray P."/>
            <person name="Ellington A."/>
            <person name="Matthews N."/>
            <person name="Ellwood M."/>
            <person name="Woodmansey R."/>
            <person name="Clark G."/>
            <person name="Cooper J."/>
            <person name="Tromans A."/>
            <person name="Grafham D."/>
            <person name="Skuce C."/>
            <person name="Pandian R."/>
            <person name="Andrews R."/>
            <person name="Harrison E."/>
            <person name="Kimberley A."/>
            <person name="Garnett J."/>
            <person name="Fosker N."/>
            <person name="Hall R."/>
            <person name="Garner P."/>
            <person name="Kelly D."/>
            <person name="Bird C."/>
            <person name="Palmer S."/>
            <person name="Gehring I."/>
            <person name="Berger A."/>
            <person name="Dooley C.M."/>
            <person name="Ersan-Urun Z."/>
            <person name="Eser C."/>
            <person name="Geiger H."/>
            <person name="Geisler M."/>
            <person name="Karotki L."/>
            <person name="Kirn A."/>
            <person name="Konantz J."/>
            <person name="Konantz M."/>
            <person name="Oberlander M."/>
            <person name="Rudolph-Geiger S."/>
            <person name="Teucke M."/>
            <person name="Lanz C."/>
            <person name="Raddatz G."/>
            <person name="Osoegawa K."/>
            <person name="Zhu B."/>
            <person name="Rapp A."/>
            <person name="Widaa S."/>
            <person name="Langford C."/>
            <person name="Yang F."/>
            <person name="Schuster S.C."/>
            <person name="Carter N.P."/>
            <person name="Harrow J."/>
            <person name="Ning Z."/>
            <person name="Herrero J."/>
            <person name="Searle S.M."/>
            <person name="Enright A."/>
            <person name="Geisler R."/>
            <person name="Plasterk R.H."/>
            <person name="Lee C."/>
            <person name="Westerfield M."/>
            <person name="de Jong P.J."/>
            <person name="Zon L.I."/>
            <person name="Postlethwait J.H."/>
            <person name="Nusslein-Volhard C."/>
            <person name="Hubbard T.J."/>
            <person name="Roest Crollius H."/>
            <person name="Rogers J."/>
            <person name="Stemple D.L."/>
        </authorList>
    </citation>
    <scope>NUCLEOTIDE SEQUENCE [LARGE SCALE GENOMIC DNA]</scope>
    <source>
        <strain>Tuebingen</strain>
    </source>
</reference>
<reference evidence="6" key="2">
    <citation type="submission" date="2005-05" db="EMBL/GenBank/DDBJ databases">
        <authorList>
            <consortium name="NIH - Zebrafish Gene Collection (ZGC) project"/>
        </authorList>
    </citation>
    <scope>NUCLEOTIDE SEQUENCE [LARGE SCALE MRNA]</scope>
    <source>
        <tissue evidence="5">Embryo</tissue>
    </source>
</reference>